<comment type="function">
    <text evidence="1">Catalyzes the reversible conversion of 3-phosphohydroxypyruvate to phosphoserine and of 3-hydroxy-2-oxo-4-phosphonooxybutanoate to phosphohydroxythreonine.</text>
</comment>
<comment type="catalytic activity">
    <reaction evidence="1">
        <text>O-phospho-L-serine + 2-oxoglutarate = 3-phosphooxypyruvate + L-glutamate</text>
        <dbReference type="Rhea" id="RHEA:14329"/>
        <dbReference type="ChEBI" id="CHEBI:16810"/>
        <dbReference type="ChEBI" id="CHEBI:18110"/>
        <dbReference type="ChEBI" id="CHEBI:29985"/>
        <dbReference type="ChEBI" id="CHEBI:57524"/>
        <dbReference type="EC" id="2.6.1.52"/>
    </reaction>
</comment>
<comment type="catalytic activity">
    <reaction evidence="1">
        <text>4-(phosphooxy)-L-threonine + 2-oxoglutarate = (R)-3-hydroxy-2-oxo-4-phosphooxybutanoate + L-glutamate</text>
        <dbReference type="Rhea" id="RHEA:16573"/>
        <dbReference type="ChEBI" id="CHEBI:16810"/>
        <dbReference type="ChEBI" id="CHEBI:29985"/>
        <dbReference type="ChEBI" id="CHEBI:58452"/>
        <dbReference type="ChEBI" id="CHEBI:58538"/>
        <dbReference type="EC" id="2.6.1.52"/>
    </reaction>
</comment>
<comment type="cofactor">
    <cofactor evidence="1">
        <name>pyridoxal 5'-phosphate</name>
        <dbReference type="ChEBI" id="CHEBI:597326"/>
    </cofactor>
    <text evidence="1">Binds 1 pyridoxal phosphate per subunit.</text>
</comment>
<comment type="pathway">
    <text evidence="1">Amino-acid biosynthesis; L-serine biosynthesis; L-serine from 3-phospho-D-glycerate: step 2/3.</text>
</comment>
<comment type="pathway">
    <text evidence="1">Cofactor biosynthesis; pyridoxine 5'-phosphate biosynthesis; pyridoxine 5'-phosphate from D-erythrose 4-phosphate: step 3/5.</text>
</comment>
<comment type="subunit">
    <text evidence="1">Homodimer.</text>
</comment>
<comment type="subcellular location">
    <subcellularLocation>
        <location evidence="1">Cytoplasm</location>
    </subcellularLocation>
</comment>
<comment type="similarity">
    <text evidence="1">Belongs to the class-V pyridoxal-phosphate-dependent aminotransferase family. SerC subfamily.</text>
</comment>
<gene>
    <name evidence="1" type="primary">serC</name>
    <name type="ordered locus">YE1537</name>
</gene>
<name>SERC_YERE8</name>
<sequence>MTQVYNFSAGPAMLPVEVLRRAEQELRNWHGLGTSVMEISHRSKEFMQVAEEAEKDLRDLMQIPANYKVLFCHGGARAQFAAVPLNLLGDSRSADYIDGGYWAHSAVKEAQKYCTPNVIDVTTHDNGVTGIAPMKQWKLSDNAAYVHYCPNETIDGLAINEEPDFGNKVVVADYSSSILSRPIDVSRYGVIYAGAQKNIGPAGLTVVIVREDLLGKARTELPSILDYKVLAENDSMFNTPPTFAWYLSGLVFKWLKEQGGLGEMGKRNQAKAELLYGAIDRTDFYRNQVATANRSWMNVPFQMIDPSLDKLFLSEAEAQGLQALKGHRVAGGMRASIYNAMPIEGVKALTDFMAEFERRHG</sequence>
<reference key="1">
    <citation type="journal article" date="1989" name="Gene">
        <title>Cloning and characterisation of the serC and aroA genes of Yersinia enterocolitica, and construction of an aroA mutant.</title>
        <authorList>
            <person name="O'Gaora P."/>
            <person name="Maskell D."/>
            <person name="Coleman D."/>
            <person name="Cafferkey M."/>
            <person name="Dougan G."/>
        </authorList>
    </citation>
    <scope>NUCLEOTIDE SEQUENCE [GENOMIC DNA]</scope>
</reference>
<reference key="2">
    <citation type="journal article" date="2006" name="PLoS Genet.">
        <title>The complete genome sequence and comparative genome analysis of the high pathogenicity Yersinia enterocolitica strain 8081.</title>
        <authorList>
            <person name="Thomson N.R."/>
            <person name="Howard S."/>
            <person name="Wren B.W."/>
            <person name="Holden M.T.G."/>
            <person name="Crossman L."/>
            <person name="Challis G.L."/>
            <person name="Churcher C."/>
            <person name="Mungall K."/>
            <person name="Brooks K."/>
            <person name="Chillingworth T."/>
            <person name="Feltwell T."/>
            <person name="Abdellah Z."/>
            <person name="Hauser H."/>
            <person name="Jagels K."/>
            <person name="Maddison M."/>
            <person name="Moule S."/>
            <person name="Sanders M."/>
            <person name="Whitehead S."/>
            <person name="Quail M.A."/>
            <person name="Dougan G."/>
            <person name="Parkhill J."/>
            <person name="Prentice M.B."/>
        </authorList>
    </citation>
    <scope>NUCLEOTIDE SEQUENCE [LARGE SCALE GENOMIC DNA]</scope>
    <source>
        <strain>NCTC 13174 / 8081</strain>
    </source>
</reference>
<keyword id="KW-0028">Amino-acid biosynthesis</keyword>
<keyword id="KW-0032">Aminotransferase</keyword>
<keyword id="KW-0963">Cytoplasm</keyword>
<keyword id="KW-0663">Pyridoxal phosphate</keyword>
<keyword id="KW-0664">Pyridoxine biosynthesis</keyword>
<keyword id="KW-0718">Serine biosynthesis</keyword>
<keyword id="KW-0808">Transferase</keyword>
<accession>P19689</accession>
<accession>A1JMI0</accession>
<organism>
    <name type="scientific">Yersinia enterocolitica serotype O:8 / biotype 1B (strain NCTC 13174 / 8081)</name>
    <dbReference type="NCBI Taxonomy" id="393305"/>
    <lineage>
        <taxon>Bacteria</taxon>
        <taxon>Pseudomonadati</taxon>
        <taxon>Pseudomonadota</taxon>
        <taxon>Gammaproteobacteria</taxon>
        <taxon>Enterobacterales</taxon>
        <taxon>Yersiniaceae</taxon>
        <taxon>Yersinia</taxon>
    </lineage>
</organism>
<dbReference type="EC" id="2.6.1.52" evidence="1"/>
<dbReference type="EMBL" id="M32213">
    <property type="protein sequence ID" value="AAA27665.1"/>
    <property type="molecule type" value="Genomic_DNA"/>
</dbReference>
<dbReference type="EMBL" id="AM286415">
    <property type="protein sequence ID" value="CAL11616.1"/>
    <property type="molecule type" value="Genomic_DNA"/>
</dbReference>
<dbReference type="PIR" id="JQ0130">
    <property type="entry name" value="XNEBPY"/>
</dbReference>
<dbReference type="RefSeq" id="WP_005171026.1">
    <property type="nucleotide sequence ID" value="NC_008800.1"/>
</dbReference>
<dbReference type="RefSeq" id="YP_001005832.1">
    <property type="nucleotide sequence ID" value="NC_008800.1"/>
</dbReference>
<dbReference type="SMR" id="P19689"/>
<dbReference type="KEGG" id="yen:YE1537"/>
<dbReference type="PATRIC" id="fig|393305.7.peg.1664"/>
<dbReference type="eggNOG" id="COG1932">
    <property type="taxonomic scope" value="Bacteria"/>
</dbReference>
<dbReference type="HOGENOM" id="CLU_034866_0_2_6"/>
<dbReference type="OrthoDB" id="9809412at2"/>
<dbReference type="UniPathway" id="UPA00135">
    <property type="reaction ID" value="UER00197"/>
</dbReference>
<dbReference type="UniPathway" id="UPA00244">
    <property type="reaction ID" value="UER00311"/>
</dbReference>
<dbReference type="Proteomes" id="UP000000642">
    <property type="component" value="Chromosome"/>
</dbReference>
<dbReference type="GO" id="GO:0005737">
    <property type="term" value="C:cytoplasm"/>
    <property type="evidence" value="ECO:0007669"/>
    <property type="project" value="UniProtKB-SubCell"/>
</dbReference>
<dbReference type="GO" id="GO:0004648">
    <property type="term" value="F:O-phospho-L-serine:2-oxoglutarate aminotransferase activity"/>
    <property type="evidence" value="ECO:0007669"/>
    <property type="project" value="UniProtKB-UniRule"/>
</dbReference>
<dbReference type="GO" id="GO:0030170">
    <property type="term" value="F:pyridoxal phosphate binding"/>
    <property type="evidence" value="ECO:0007669"/>
    <property type="project" value="UniProtKB-UniRule"/>
</dbReference>
<dbReference type="GO" id="GO:0006564">
    <property type="term" value="P:L-serine biosynthetic process"/>
    <property type="evidence" value="ECO:0007669"/>
    <property type="project" value="UniProtKB-UniRule"/>
</dbReference>
<dbReference type="GO" id="GO:0008615">
    <property type="term" value="P:pyridoxine biosynthetic process"/>
    <property type="evidence" value="ECO:0007669"/>
    <property type="project" value="UniProtKB-UniRule"/>
</dbReference>
<dbReference type="CDD" id="cd00611">
    <property type="entry name" value="PSAT_like"/>
    <property type="match status" value="1"/>
</dbReference>
<dbReference type="FunFam" id="3.40.640.10:FF:000010">
    <property type="entry name" value="Phosphoserine aminotransferase"/>
    <property type="match status" value="1"/>
</dbReference>
<dbReference type="FunFam" id="3.90.1150.10:FF:000006">
    <property type="entry name" value="Phosphoserine aminotransferase"/>
    <property type="match status" value="1"/>
</dbReference>
<dbReference type="Gene3D" id="3.90.1150.10">
    <property type="entry name" value="Aspartate Aminotransferase, domain 1"/>
    <property type="match status" value="1"/>
</dbReference>
<dbReference type="Gene3D" id="3.40.640.10">
    <property type="entry name" value="Type I PLP-dependent aspartate aminotransferase-like (Major domain)"/>
    <property type="match status" value="1"/>
</dbReference>
<dbReference type="HAMAP" id="MF_00160">
    <property type="entry name" value="SerC_aminotrans_5"/>
    <property type="match status" value="1"/>
</dbReference>
<dbReference type="InterPro" id="IPR000192">
    <property type="entry name" value="Aminotrans_V_dom"/>
</dbReference>
<dbReference type="InterPro" id="IPR020578">
    <property type="entry name" value="Aminotrans_V_PyrdxlP_BS"/>
</dbReference>
<dbReference type="InterPro" id="IPR022278">
    <property type="entry name" value="Pser_aminoTfrase"/>
</dbReference>
<dbReference type="InterPro" id="IPR015424">
    <property type="entry name" value="PyrdxlP-dep_Trfase"/>
</dbReference>
<dbReference type="InterPro" id="IPR015421">
    <property type="entry name" value="PyrdxlP-dep_Trfase_major"/>
</dbReference>
<dbReference type="InterPro" id="IPR015422">
    <property type="entry name" value="PyrdxlP-dep_Trfase_small"/>
</dbReference>
<dbReference type="NCBIfam" id="NF003764">
    <property type="entry name" value="PRK05355.1"/>
    <property type="match status" value="1"/>
</dbReference>
<dbReference type="NCBIfam" id="TIGR01364">
    <property type="entry name" value="serC_1"/>
    <property type="match status" value="1"/>
</dbReference>
<dbReference type="PANTHER" id="PTHR43247">
    <property type="entry name" value="PHOSPHOSERINE AMINOTRANSFERASE"/>
    <property type="match status" value="1"/>
</dbReference>
<dbReference type="PANTHER" id="PTHR43247:SF1">
    <property type="entry name" value="PHOSPHOSERINE AMINOTRANSFERASE"/>
    <property type="match status" value="1"/>
</dbReference>
<dbReference type="Pfam" id="PF00266">
    <property type="entry name" value="Aminotran_5"/>
    <property type="match status" value="1"/>
</dbReference>
<dbReference type="PIRSF" id="PIRSF000525">
    <property type="entry name" value="SerC"/>
    <property type="match status" value="1"/>
</dbReference>
<dbReference type="SUPFAM" id="SSF53383">
    <property type="entry name" value="PLP-dependent transferases"/>
    <property type="match status" value="1"/>
</dbReference>
<dbReference type="PROSITE" id="PS00595">
    <property type="entry name" value="AA_TRANSFER_CLASS_5"/>
    <property type="match status" value="1"/>
</dbReference>
<protein>
    <recommendedName>
        <fullName evidence="1">Phosphoserine aminotransferase</fullName>
        <ecNumber evidence="1">2.6.1.52</ecNumber>
    </recommendedName>
    <alternativeName>
        <fullName evidence="1">Phosphohydroxythreonine aminotransferase</fullName>
        <shortName evidence="1">PSAT</shortName>
    </alternativeName>
</protein>
<evidence type="ECO:0000255" key="1">
    <source>
        <dbReference type="HAMAP-Rule" id="MF_00160"/>
    </source>
</evidence>
<evidence type="ECO:0000305" key="2"/>
<feature type="chain" id="PRO_0000150226" description="Phosphoserine aminotransferase">
    <location>
        <begin position="1"/>
        <end position="361"/>
    </location>
</feature>
<feature type="binding site" evidence="1">
    <location>
        <position position="42"/>
    </location>
    <ligand>
        <name>L-glutamate</name>
        <dbReference type="ChEBI" id="CHEBI:29985"/>
    </ligand>
</feature>
<feature type="binding site" evidence="1">
    <location>
        <begin position="76"/>
        <end position="77"/>
    </location>
    <ligand>
        <name>pyridoxal 5'-phosphate</name>
        <dbReference type="ChEBI" id="CHEBI:597326"/>
    </ligand>
</feature>
<feature type="binding site" evidence="1">
    <location>
        <position position="102"/>
    </location>
    <ligand>
        <name>pyridoxal 5'-phosphate</name>
        <dbReference type="ChEBI" id="CHEBI:597326"/>
    </ligand>
</feature>
<feature type="binding site" evidence="1">
    <location>
        <position position="153"/>
    </location>
    <ligand>
        <name>pyridoxal 5'-phosphate</name>
        <dbReference type="ChEBI" id="CHEBI:597326"/>
    </ligand>
</feature>
<feature type="binding site" evidence="1">
    <location>
        <position position="173"/>
    </location>
    <ligand>
        <name>pyridoxal 5'-phosphate</name>
        <dbReference type="ChEBI" id="CHEBI:597326"/>
    </ligand>
</feature>
<feature type="binding site" evidence="1">
    <location>
        <position position="196"/>
    </location>
    <ligand>
        <name>pyridoxal 5'-phosphate</name>
        <dbReference type="ChEBI" id="CHEBI:597326"/>
    </ligand>
</feature>
<feature type="binding site" evidence="1">
    <location>
        <begin position="238"/>
        <end position="239"/>
    </location>
    <ligand>
        <name>pyridoxal 5'-phosphate</name>
        <dbReference type="ChEBI" id="CHEBI:597326"/>
    </ligand>
</feature>
<feature type="modified residue" description="N6-(pyridoxal phosphate)lysine" evidence="1">
    <location>
        <position position="197"/>
    </location>
</feature>
<feature type="sequence conflict" description="In Ref. 1; AAA27665." evidence="2" ref="1">
    <original>A</original>
    <variation>R</variation>
    <location>
        <position position="76"/>
    </location>
</feature>
<proteinExistence type="inferred from homology"/>